<keyword id="KW-0067">ATP-binding</keyword>
<keyword id="KW-0436">Ligase</keyword>
<keyword id="KW-0460">Magnesium</keyword>
<keyword id="KW-0479">Metal-binding</keyword>
<keyword id="KW-0520">NAD</keyword>
<keyword id="KW-0547">Nucleotide-binding</keyword>
<evidence type="ECO:0000255" key="1">
    <source>
        <dbReference type="HAMAP-Rule" id="MF_00193"/>
    </source>
</evidence>
<name>NADE_SALG2</name>
<feature type="chain" id="PRO_1000099040" description="NH(3)-dependent NAD(+) synthetase">
    <location>
        <begin position="1"/>
        <end position="275"/>
    </location>
</feature>
<feature type="binding site" evidence="1">
    <location>
        <begin position="46"/>
        <end position="53"/>
    </location>
    <ligand>
        <name>ATP</name>
        <dbReference type="ChEBI" id="CHEBI:30616"/>
    </ligand>
</feature>
<feature type="binding site" evidence="1">
    <location>
        <position position="52"/>
    </location>
    <ligand>
        <name>Mg(2+)</name>
        <dbReference type="ChEBI" id="CHEBI:18420"/>
    </ligand>
</feature>
<feature type="binding site" evidence="1">
    <location>
        <position position="140"/>
    </location>
    <ligand>
        <name>deamido-NAD(+)</name>
        <dbReference type="ChEBI" id="CHEBI:58437"/>
    </ligand>
</feature>
<feature type="binding site" evidence="1">
    <location>
        <position position="160"/>
    </location>
    <ligand>
        <name>ATP</name>
        <dbReference type="ChEBI" id="CHEBI:30616"/>
    </ligand>
</feature>
<feature type="binding site" evidence="1">
    <location>
        <position position="165"/>
    </location>
    <ligand>
        <name>Mg(2+)</name>
        <dbReference type="ChEBI" id="CHEBI:18420"/>
    </ligand>
</feature>
<feature type="binding site" evidence="1">
    <location>
        <position position="173"/>
    </location>
    <ligand>
        <name>deamido-NAD(+)</name>
        <dbReference type="ChEBI" id="CHEBI:58437"/>
    </ligand>
</feature>
<feature type="binding site" evidence="1">
    <location>
        <position position="180"/>
    </location>
    <ligand>
        <name>deamido-NAD(+)</name>
        <dbReference type="ChEBI" id="CHEBI:58437"/>
    </ligand>
</feature>
<feature type="binding site" evidence="1">
    <location>
        <position position="189"/>
    </location>
    <ligand>
        <name>ATP</name>
        <dbReference type="ChEBI" id="CHEBI:30616"/>
    </ligand>
</feature>
<feature type="binding site" evidence="1">
    <location>
        <position position="211"/>
    </location>
    <ligand>
        <name>ATP</name>
        <dbReference type="ChEBI" id="CHEBI:30616"/>
    </ligand>
</feature>
<feature type="binding site" evidence="1">
    <location>
        <begin position="260"/>
        <end position="261"/>
    </location>
    <ligand>
        <name>deamido-NAD(+)</name>
        <dbReference type="ChEBI" id="CHEBI:58437"/>
    </ligand>
</feature>
<organism>
    <name type="scientific">Salmonella gallinarum (strain 287/91 / NCTC 13346)</name>
    <dbReference type="NCBI Taxonomy" id="550538"/>
    <lineage>
        <taxon>Bacteria</taxon>
        <taxon>Pseudomonadati</taxon>
        <taxon>Pseudomonadota</taxon>
        <taxon>Gammaproteobacteria</taxon>
        <taxon>Enterobacterales</taxon>
        <taxon>Enterobacteriaceae</taxon>
        <taxon>Salmonella</taxon>
    </lineage>
</organism>
<proteinExistence type="inferred from homology"/>
<comment type="function">
    <text evidence="1">Catalyzes the ATP-dependent amidation of deamido-NAD to form NAD. Uses ammonia as a nitrogen source.</text>
</comment>
<comment type="catalytic activity">
    <reaction evidence="1">
        <text>deamido-NAD(+) + NH4(+) + ATP = AMP + diphosphate + NAD(+) + H(+)</text>
        <dbReference type="Rhea" id="RHEA:21188"/>
        <dbReference type="ChEBI" id="CHEBI:15378"/>
        <dbReference type="ChEBI" id="CHEBI:28938"/>
        <dbReference type="ChEBI" id="CHEBI:30616"/>
        <dbReference type="ChEBI" id="CHEBI:33019"/>
        <dbReference type="ChEBI" id="CHEBI:57540"/>
        <dbReference type="ChEBI" id="CHEBI:58437"/>
        <dbReference type="ChEBI" id="CHEBI:456215"/>
        <dbReference type="EC" id="6.3.1.5"/>
    </reaction>
</comment>
<comment type="pathway">
    <text evidence="1">Cofactor biosynthesis; NAD(+) biosynthesis; NAD(+) from deamido-NAD(+) (ammonia route): step 1/1.</text>
</comment>
<comment type="subunit">
    <text evidence="1">Homodimer.</text>
</comment>
<comment type="similarity">
    <text evidence="1">Belongs to the NAD synthetase family.</text>
</comment>
<dbReference type="EC" id="6.3.1.5" evidence="1"/>
<dbReference type="EMBL" id="AM933173">
    <property type="protein sequence ID" value="CAR37662.1"/>
    <property type="molecule type" value="Genomic_DNA"/>
</dbReference>
<dbReference type="RefSeq" id="WP_000174981.1">
    <property type="nucleotide sequence ID" value="NC_011274.1"/>
</dbReference>
<dbReference type="SMR" id="B5RAZ4"/>
<dbReference type="KEGG" id="seg:SG1806"/>
<dbReference type="HOGENOM" id="CLU_059327_3_0_6"/>
<dbReference type="UniPathway" id="UPA00253">
    <property type="reaction ID" value="UER00333"/>
</dbReference>
<dbReference type="Proteomes" id="UP000008321">
    <property type="component" value="Chromosome"/>
</dbReference>
<dbReference type="GO" id="GO:0005737">
    <property type="term" value="C:cytoplasm"/>
    <property type="evidence" value="ECO:0007669"/>
    <property type="project" value="InterPro"/>
</dbReference>
<dbReference type="GO" id="GO:0005524">
    <property type="term" value="F:ATP binding"/>
    <property type="evidence" value="ECO:0007669"/>
    <property type="project" value="UniProtKB-UniRule"/>
</dbReference>
<dbReference type="GO" id="GO:0004359">
    <property type="term" value="F:glutaminase activity"/>
    <property type="evidence" value="ECO:0007669"/>
    <property type="project" value="InterPro"/>
</dbReference>
<dbReference type="GO" id="GO:0046872">
    <property type="term" value="F:metal ion binding"/>
    <property type="evidence" value="ECO:0007669"/>
    <property type="project" value="UniProtKB-KW"/>
</dbReference>
<dbReference type="GO" id="GO:0003952">
    <property type="term" value="F:NAD+ synthase (glutamine-hydrolyzing) activity"/>
    <property type="evidence" value="ECO:0007669"/>
    <property type="project" value="InterPro"/>
</dbReference>
<dbReference type="GO" id="GO:0008795">
    <property type="term" value="F:NAD+ synthase activity"/>
    <property type="evidence" value="ECO:0007669"/>
    <property type="project" value="UniProtKB-UniRule"/>
</dbReference>
<dbReference type="GO" id="GO:0009435">
    <property type="term" value="P:NAD biosynthetic process"/>
    <property type="evidence" value="ECO:0007669"/>
    <property type="project" value="UniProtKB-UniRule"/>
</dbReference>
<dbReference type="CDD" id="cd00553">
    <property type="entry name" value="NAD_synthase"/>
    <property type="match status" value="1"/>
</dbReference>
<dbReference type="FunFam" id="3.40.50.620:FF:000015">
    <property type="entry name" value="NH(3)-dependent NAD(+) synthetase"/>
    <property type="match status" value="1"/>
</dbReference>
<dbReference type="Gene3D" id="3.40.50.620">
    <property type="entry name" value="HUPs"/>
    <property type="match status" value="1"/>
</dbReference>
<dbReference type="HAMAP" id="MF_00193">
    <property type="entry name" value="NadE_ammonia_dep"/>
    <property type="match status" value="1"/>
</dbReference>
<dbReference type="InterPro" id="IPR022310">
    <property type="entry name" value="NAD/GMP_synthase"/>
</dbReference>
<dbReference type="InterPro" id="IPR003694">
    <property type="entry name" value="NAD_synthase"/>
</dbReference>
<dbReference type="InterPro" id="IPR022926">
    <property type="entry name" value="NH(3)-dep_NAD(+)_synth"/>
</dbReference>
<dbReference type="InterPro" id="IPR014729">
    <property type="entry name" value="Rossmann-like_a/b/a_fold"/>
</dbReference>
<dbReference type="NCBIfam" id="TIGR00552">
    <property type="entry name" value="nadE"/>
    <property type="match status" value="1"/>
</dbReference>
<dbReference type="NCBIfam" id="NF001979">
    <property type="entry name" value="PRK00768.1"/>
    <property type="match status" value="1"/>
</dbReference>
<dbReference type="PANTHER" id="PTHR23090">
    <property type="entry name" value="NH 3 /GLUTAMINE-DEPENDENT NAD + SYNTHETASE"/>
    <property type="match status" value="1"/>
</dbReference>
<dbReference type="PANTHER" id="PTHR23090:SF7">
    <property type="entry name" value="NH(3)-DEPENDENT NAD(+) SYNTHETASE"/>
    <property type="match status" value="1"/>
</dbReference>
<dbReference type="Pfam" id="PF02540">
    <property type="entry name" value="NAD_synthase"/>
    <property type="match status" value="1"/>
</dbReference>
<dbReference type="SUPFAM" id="SSF52402">
    <property type="entry name" value="Adenine nucleotide alpha hydrolases-like"/>
    <property type="match status" value="1"/>
</dbReference>
<reference key="1">
    <citation type="journal article" date="2008" name="Genome Res.">
        <title>Comparative genome analysis of Salmonella enteritidis PT4 and Salmonella gallinarum 287/91 provides insights into evolutionary and host adaptation pathways.</title>
        <authorList>
            <person name="Thomson N.R."/>
            <person name="Clayton D.J."/>
            <person name="Windhorst D."/>
            <person name="Vernikos G."/>
            <person name="Davidson S."/>
            <person name="Churcher C."/>
            <person name="Quail M.A."/>
            <person name="Stevens M."/>
            <person name="Jones M.A."/>
            <person name="Watson M."/>
            <person name="Barron A."/>
            <person name="Layton A."/>
            <person name="Pickard D."/>
            <person name="Kingsley R.A."/>
            <person name="Bignell A."/>
            <person name="Clark L."/>
            <person name="Harris B."/>
            <person name="Ormond D."/>
            <person name="Abdellah Z."/>
            <person name="Brooks K."/>
            <person name="Cherevach I."/>
            <person name="Chillingworth T."/>
            <person name="Woodward J."/>
            <person name="Norberczak H."/>
            <person name="Lord A."/>
            <person name="Arrowsmith C."/>
            <person name="Jagels K."/>
            <person name="Moule S."/>
            <person name="Mungall K."/>
            <person name="Saunders M."/>
            <person name="Whitehead S."/>
            <person name="Chabalgoity J.A."/>
            <person name="Maskell D."/>
            <person name="Humphreys T."/>
            <person name="Roberts M."/>
            <person name="Barrow P.A."/>
            <person name="Dougan G."/>
            <person name="Parkhill J."/>
        </authorList>
    </citation>
    <scope>NUCLEOTIDE SEQUENCE [LARGE SCALE GENOMIC DNA]</scope>
    <source>
        <strain>287/91 / NCTC 13346</strain>
    </source>
</reference>
<sequence length="275" mass="30484">MTLQQEIIQALGAKPHINPEEEIRRSVDFLKAYLKTYPFLKSLVLGISGGQDSTLAGKLSQMAIAELREETGDNALQFIAVRLPYGVQADEQDCQDAIAFIQPDRVLTVNIKGAVLASEQALREAGIELSDFVRGNEKARERMKAQYSIAGMTHGVVVGTDHAAEAITGFFTKYGDGGTDINPLHRLNKRQGKQLLAALGCPEHLYKKVPTADLEDDRPSLPDEAALGVTYDNIDDYLEGKTLDPAIAKTIEGWYVKTEHKRRLPITVFDDFWKR</sequence>
<protein>
    <recommendedName>
        <fullName evidence="1">NH(3)-dependent NAD(+) synthetase</fullName>
        <ecNumber evidence="1">6.3.1.5</ecNumber>
    </recommendedName>
</protein>
<gene>
    <name evidence="1" type="primary">nadE</name>
    <name type="ordered locus">SG1806</name>
</gene>
<accession>B5RAZ4</accession>